<reference key="1">
    <citation type="journal article" date="2000" name="Nature">
        <title>The genome sequence of the plant pathogen Xylella fastidiosa.</title>
        <authorList>
            <person name="Simpson A.J.G."/>
            <person name="Reinach F.C."/>
            <person name="Arruda P."/>
            <person name="Abreu F.A."/>
            <person name="Acencio M."/>
            <person name="Alvarenga R."/>
            <person name="Alves L.M.C."/>
            <person name="Araya J.E."/>
            <person name="Baia G.S."/>
            <person name="Baptista C.S."/>
            <person name="Barros M.H."/>
            <person name="Bonaccorsi E.D."/>
            <person name="Bordin S."/>
            <person name="Bove J.M."/>
            <person name="Briones M.R.S."/>
            <person name="Bueno M.R.P."/>
            <person name="Camargo A.A."/>
            <person name="Camargo L.E.A."/>
            <person name="Carraro D.M."/>
            <person name="Carrer H."/>
            <person name="Colauto N.B."/>
            <person name="Colombo C."/>
            <person name="Costa F.F."/>
            <person name="Costa M.C.R."/>
            <person name="Costa-Neto C.M."/>
            <person name="Coutinho L.L."/>
            <person name="Cristofani M."/>
            <person name="Dias-Neto E."/>
            <person name="Docena C."/>
            <person name="El-Dorry H."/>
            <person name="Facincani A.P."/>
            <person name="Ferreira A.J.S."/>
            <person name="Ferreira V.C.A."/>
            <person name="Ferro J.A."/>
            <person name="Fraga J.S."/>
            <person name="Franca S.C."/>
            <person name="Franco M.C."/>
            <person name="Frohme M."/>
            <person name="Furlan L.R."/>
            <person name="Garnier M."/>
            <person name="Goldman G.H."/>
            <person name="Goldman M.H.S."/>
            <person name="Gomes S.L."/>
            <person name="Gruber A."/>
            <person name="Ho P.L."/>
            <person name="Hoheisel J.D."/>
            <person name="Junqueira M.L."/>
            <person name="Kemper E.L."/>
            <person name="Kitajima J.P."/>
            <person name="Krieger J.E."/>
            <person name="Kuramae E.E."/>
            <person name="Laigret F."/>
            <person name="Lambais M.R."/>
            <person name="Leite L.C.C."/>
            <person name="Lemos E.G.M."/>
            <person name="Lemos M.V.F."/>
            <person name="Lopes S.A."/>
            <person name="Lopes C.R."/>
            <person name="Machado J.A."/>
            <person name="Machado M.A."/>
            <person name="Madeira A.M.B.N."/>
            <person name="Madeira H.M.F."/>
            <person name="Marino C.L."/>
            <person name="Marques M.V."/>
            <person name="Martins E.A.L."/>
            <person name="Martins E.M.F."/>
            <person name="Matsukuma A.Y."/>
            <person name="Menck C.F.M."/>
            <person name="Miracca E.C."/>
            <person name="Miyaki C.Y."/>
            <person name="Monteiro-Vitorello C.B."/>
            <person name="Moon D.H."/>
            <person name="Nagai M.A."/>
            <person name="Nascimento A.L.T.O."/>
            <person name="Netto L.E.S."/>
            <person name="Nhani A. Jr."/>
            <person name="Nobrega F.G."/>
            <person name="Nunes L.R."/>
            <person name="Oliveira M.A."/>
            <person name="de Oliveira M.C."/>
            <person name="de Oliveira R.C."/>
            <person name="Palmieri D.A."/>
            <person name="Paris A."/>
            <person name="Peixoto B.R."/>
            <person name="Pereira G.A.G."/>
            <person name="Pereira H.A. Jr."/>
            <person name="Pesquero J.B."/>
            <person name="Quaggio R.B."/>
            <person name="Roberto P.G."/>
            <person name="Rodrigues V."/>
            <person name="de Rosa A.J.M."/>
            <person name="de Rosa V.E. Jr."/>
            <person name="de Sa R.G."/>
            <person name="Santelli R.V."/>
            <person name="Sawasaki H.E."/>
            <person name="da Silva A.C.R."/>
            <person name="da Silva A.M."/>
            <person name="da Silva F.R."/>
            <person name="Silva W.A. Jr."/>
            <person name="da Silveira J.F."/>
            <person name="Silvestri M.L.Z."/>
            <person name="Siqueira W.J."/>
            <person name="de Souza A.A."/>
            <person name="de Souza A.P."/>
            <person name="Terenzi M.F."/>
            <person name="Truffi D."/>
            <person name="Tsai S.M."/>
            <person name="Tsuhako M.H."/>
            <person name="Vallada H."/>
            <person name="Van Sluys M.A."/>
            <person name="Verjovski-Almeida S."/>
            <person name="Vettore A.L."/>
            <person name="Zago M.A."/>
            <person name="Zatz M."/>
            <person name="Meidanis J."/>
            <person name="Setubal J.C."/>
        </authorList>
    </citation>
    <scope>NUCLEOTIDE SEQUENCE [LARGE SCALE GENOMIC DNA]</scope>
    <source>
        <strain>9a5c</strain>
    </source>
</reference>
<protein>
    <recommendedName>
        <fullName evidence="1">Threonine--tRNA ligase</fullName>
        <ecNumber evidence="1">6.1.1.3</ecNumber>
    </recommendedName>
    <alternativeName>
        <fullName evidence="1">Threonyl-tRNA synthetase</fullName>
        <shortName evidence="1">ThrRS</shortName>
    </alternativeName>
</protein>
<sequence>MITITLPDGSRREFEGPVSVMQVAHAIGPGLAKATIAGQIDGGHLVDASDLIEHDAMLRIITPEDQEALDIIRHSCAHLVGHAVKQLYPEAKMVIGPVIADGFYYDIYSKRPFTPEDLAAIEQRMVELIAQDYHVVKHITARHDVVRLFKERGEDYKLRLIEEMGPEVTAMGIYHHQEYVDMCRGPHVPNTRFLKAFKLTRISGAYWRGDTKNEQLQRIYGTAWADKKQLEAHMQRLQDAEKRDHRKIGKVQDLFHLQEEGPGLVFWHPKGWVIWQTIENYIRRVYRNSGYGELRCPQILDVSLWQKSGHWDNYKENMFFTDSEKRTYAVKPMNCPGHVQVFNQGLHSYRDLPIRYGEFGACHRNEPSGALHGLLRVRGFTQDDGHIFCTEAQIESEVTAFHRQALQVYADFGFEDIQIKIALRPDKRLGDSLSWDKAEAALRAALSACEVEWQELPGEGAFYGPKIEYHLKDAIGRTWQLGTIQVDFMMPGRLGAEYVDERSQRCHPVMLHRAIVGSMERFIGILIEHYAGIWPTWLAPVQVVVANITDAQYEYAERVHKALLNQGFRVNTDLRNEKIGYKIREHTLQRVPYLLVVGDREKENGTVAVRTCSREDLGAMSISAFVERLQAEQVV</sequence>
<gene>
    <name evidence="1" type="primary">thrS</name>
    <name type="ordered locus">XF_0736</name>
</gene>
<dbReference type="EC" id="6.1.1.3" evidence="1"/>
<dbReference type="EMBL" id="AE003849">
    <property type="protein sequence ID" value="AAF83546.1"/>
    <property type="molecule type" value="Genomic_DNA"/>
</dbReference>
<dbReference type="PIR" id="D82770">
    <property type="entry name" value="D82770"/>
</dbReference>
<dbReference type="RefSeq" id="WP_010893260.1">
    <property type="nucleotide sequence ID" value="NC_002488.3"/>
</dbReference>
<dbReference type="SMR" id="Q9PFE2"/>
<dbReference type="STRING" id="160492.XF_0736"/>
<dbReference type="KEGG" id="xfa:XF_0736"/>
<dbReference type="eggNOG" id="COG0441">
    <property type="taxonomic scope" value="Bacteria"/>
</dbReference>
<dbReference type="HOGENOM" id="CLU_008554_0_1_6"/>
<dbReference type="Proteomes" id="UP000000812">
    <property type="component" value="Chromosome"/>
</dbReference>
<dbReference type="GO" id="GO:0005829">
    <property type="term" value="C:cytosol"/>
    <property type="evidence" value="ECO:0007669"/>
    <property type="project" value="TreeGrafter"/>
</dbReference>
<dbReference type="GO" id="GO:0005524">
    <property type="term" value="F:ATP binding"/>
    <property type="evidence" value="ECO:0007669"/>
    <property type="project" value="UniProtKB-UniRule"/>
</dbReference>
<dbReference type="GO" id="GO:0046872">
    <property type="term" value="F:metal ion binding"/>
    <property type="evidence" value="ECO:0007669"/>
    <property type="project" value="UniProtKB-KW"/>
</dbReference>
<dbReference type="GO" id="GO:0004829">
    <property type="term" value="F:threonine-tRNA ligase activity"/>
    <property type="evidence" value="ECO:0007669"/>
    <property type="project" value="UniProtKB-UniRule"/>
</dbReference>
<dbReference type="GO" id="GO:0000049">
    <property type="term" value="F:tRNA binding"/>
    <property type="evidence" value="ECO:0007669"/>
    <property type="project" value="UniProtKB-KW"/>
</dbReference>
<dbReference type="GO" id="GO:0006435">
    <property type="term" value="P:threonyl-tRNA aminoacylation"/>
    <property type="evidence" value="ECO:0007669"/>
    <property type="project" value="UniProtKB-UniRule"/>
</dbReference>
<dbReference type="CDD" id="cd01667">
    <property type="entry name" value="TGS_ThrRS"/>
    <property type="match status" value="1"/>
</dbReference>
<dbReference type="CDD" id="cd00860">
    <property type="entry name" value="ThrRS_anticodon"/>
    <property type="match status" value="1"/>
</dbReference>
<dbReference type="CDD" id="cd00771">
    <property type="entry name" value="ThrRS_core"/>
    <property type="match status" value="1"/>
</dbReference>
<dbReference type="FunFam" id="3.10.20.30:FF:000005">
    <property type="entry name" value="Threonine--tRNA ligase"/>
    <property type="match status" value="1"/>
</dbReference>
<dbReference type="FunFam" id="3.30.54.20:FF:000002">
    <property type="entry name" value="Threonine--tRNA ligase"/>
    <property type="match status" value="1"/>
</dbReference>
<dbReference type="FunFam" id="3.30.930.10:FF:000002">
    <property type="entry name" value="Threonine--tRNA ligase"/>
    <property type="match status" value="1"/>
</dbReference>
<dbReference type="FunFam" id="3.40.50.800:FF:000001">
    <property type="entry name" value="Threonine--tRNA ligase"/>
    <property type="match status" value="1"/>
</dbReference>
<dbReference type="FunFam" id="3.30.980.10:FF:000005">
    <property type="entry name" value="Threonyl-tRNA synthetase, mitochondrial"/>
    <property type="match status" value="1"/>
</dbReference>
<dbReference type="Gene3D" id="3.10.20.30">
    <property type="match status" value="1"/>
</dbReference>
<dbReference type="Gene3D" id="3.30.54.20">
    <property type="match status" value="1"/>
</dbReference>
<dbReference type="Gene3D" id="3.40.50.800">
    <property type="entry name" value="Anticodon-binding domain"/>
    <property type="match status" value="1"/>
</dbReference>
<dbReference type="Gene3D" id="3.30.930.10">
    <property type="entry name" value="Bira Bifunctional Protein, Domain 2"/>
    <property type="match status" value="1"/>
</dbReference>
<dbReference type="Gene3D" id="3.30.980.10">
    <property type="entry name" value="Threonyl-trna Synthetase, Chain A, domain 2"/>
    <property type="match status" value="1"/>
</dbReference>
<dbReference type="HAMAP" id="MF_00184">
    <property type="entry name" value="Thr_tRNA_synth"/>
    <property type="match status" value="1"/>
</dbReference>
<dbReference type="InterPro" id="IPR002314">
    <property type="entry name" value="aa-tRNA-synt_IIb"/>
</dbReference>
<dbReference type="InterPro" id="IPR006195">
    <property type="entry name" value="aa-tRNA-synth_II"/>
</dbReference>
<dbReference type="InterPro" id="IPR045864">
    <property type="entry name" value="aa-tRNA-synth_II/BPL/LPL"/>
</dbReference>
<dbReference type="InterPro" id="IPR004154">
    <property type="entry name" value="Anticodon-bd"/>
</dbReference>
<dbReference type="InterPro" id="IPR036621">
    <property type="entry name" value="Anticodon-bd_dom_sf"/>
</dbReference>
<dbReference type="InterPro" id="IPR012675">
    <property type="entry name" value="Beta-grasp_dom_sf"/>
</dbReference>
<dbReference type="InterPro" id="IPR004095">
    <property type="entry name" value="TGS"/>
</dbReference>
<dbReference type="InterPro" id="IPR012676">
    <property type="entry name" value="TGS-like"/>
</dbReference>
<dbReference type="InterPro" id="IPR002320">
    <property type="entry name" value="Thr-tRNA-ligase_IIa"/>
</dbReference>
<dbReference type="InterPro" id="IPR018163">
    <property type="entry name" value="Thr/Ala-tRNA-synth_IIc_edit"/>
</dbReference>
<dbReference type="InterPro" id="IPR047246">
    <property type="entry name" value="ThrRS_anticodon"/>
</dbReference>
<dbReference type="InterPro" id="IPR033728">
    <property type="entry name" value="ThrRS_core"/>
</dbReference>
<dbReference type="InterPro" id="IPR012947">
    <property type="entry name" value="tRNA_SAD"/>
</dbReference>
<dbReference type="NCBIfam" id="TIGR00418">
    <property type="entry name" value="thrS"/>
    <property type="match status" value="1"/>
</dbReference>
<dbReference type="PANTHER" id="PTHR11451:SF44">
    <property type="entry name" value="THREONINE--TRNA LIGASE, CHLOROPLASTIC_MITOCHONDRIAL 2"/>
    <property type="match status" value="1"/>
</dbReference>
<dbReference type="PANTHER" id="PTHR11451">
    <property type="entry name" value="THREONINE-TRNA LIGASE"/>
    <property type="match status" value="1"/>
</dbReference>
<dbReference type="Pfam" id="PF03129">
    <property type="entry name" value="HGTP_anticodon"/>
    <property type="match status" value="1"/>
</dbReference>
<dbReference type="Pfam" id="PF02824">
    <property type="entry name" value="TGS"/>
    <property type="match status" value="1"/>
</dbReference>
<dbReference type="Pfam" id="PF00587">
    <property type="entry name" value="tRNA-synt_2b"/>
    <property type="match status" value="1"/>
</dbReference>
<dbReference type="Pfam" id="PF07973">
    <property type="entry name" value="tRNA_SAD"/>
    <property type="match status" value="1"/>
</dbReference>
<dbReference type="PRINTS" id="PR01047">
    <property type="entry name" value="TRNASYNTHTHR"/>
</dbReference>
<dbReference type="SMART" id="SM00863">
    <property type="entry name" value="tRNA_SAD"/>
    <property type="match status" value="1"/>
</dbReference>
<dbReference type="SUPFAM" id="SSF52954">
    <property type="entry name" value="Class II aaRS ABD-related"/>
    <property type="match status" value="1"/>
</dbReference>
<dbReference type="SUPFAM" id="SSF55681">
    <property type="entry name" value="Class II aaRS and biotin synthetases"/>
    <property type="match status" value="1"/>
</dbReference>
<dbReference type="SUPFAM" id="SSF81271">
    <property type="entry name" value="TGS-like"/>
    <property type="match status" value="1"/>
</dbReference>
<dbReference type="SUPFAM" id="SSF55186">
    <property type="entry name" value="ThrRS/AlaRS common domain"/>
    <property type="match status" value="1"/>
</dbReference>
<dbReference type="PROSITE" id="PS50862">
    <property type="entry name" value="AA_TRNA_LIGASE_II"/>
    <property type="match status" value="1"/>
</dbReference>
<dbReference type="PROSITE" id="PS51880">
    <property type="entry name" value="TGS"/>
    <property type="match status" value="1"/>
</dbReference>
<feature type="chain" id="PRO_0000101092" description="Threonine--tRNA ligase">
    <location>
        <begin position="1"/>
        <end position="635"/>
    </location>
</feature>
<feature type="domain" description="TGS" evidence="2">
    <location>
        <begin position="1"/>
        <end position="62"/>
    </location>
</feature>
<feature type="region of interest" description="Catalytic" evidence="1">
    <location>
        <begin position="244"/>
        <end position="535"/>
    </location>
</feature>
<feature type="binding site" evidence="1">
    <location>
        <position position="335"/>
    </location>
    <ligand>
        <name>Zn(2+)</name>
        <dbReference type="ChEBI" id="CHEBI:29105"/>
    </ligand>
</feature>
<feature type="binding site" evidence="1">
    <location>
        <position position="386"/>
    </location>
    <ligand>
        <name>Zn(2+)</name>
        <dbReference type="ChEBI" id="CHEBI:29105"/>
    </ligand>
</feature>
<feature type="binding site" evidence="1">
    <location>
        <position position="512"/>
    </location>
    <ligand>
        <name>Zn(2+)</name>
        <dbReference type="ChEBI" id="CHEBI:29105"/>
    </ligand>
</feature>
<evidence type="ECO:0000255" key="1">
    <source>
        <dbReference type="HAMAP-Rule" id="MF_00184"/>
    </source>
</evidence>
<evidence type="ECO:0000255" key="2">
    <source>
        <dbReference type="PROSITE-ProRule" id="PRU01228"/>
    </source>
</evidence>
<proteinExistence type="inferred from homology"/>
<keyword id="KW-0030">Aminoacyl-tRNA synthetase</keyword>
<keyword id="KW-0067">ATP-binding</keyword>
<keyword id="KW-0963">Cytoplasm</keyword>
<keyword id="KW-0436">Ligase</keyword>
<keyword id="KW-0479">Metal-binding</keyword>
<keyword id="KW-0547">Nucleotide-binding</keyword>
<keyword id="KW-0648">Protein biosynthesis</keyword>
<keyword id="KW-0694">RNA-binding</keyword>
<keyword id="KW-0820">tRNA-binding</keyword>
<keyword id="KW-0862">Zinc</keyword>
<comment type="function">
    <text evidence="1">Catalyzes the attachment of threonine to tRNA(Thr) in a two-step reaction: L-threonine is first activated by ATP to form Thr-AMP and then transferred to the acceptor end of tRNA(Thr). Also edits incorrectly charged L-seryl-tRNA(Thr).</text>
</comment>
<comment type="catalytic activity">
    <reaction evidence="1">
        <text>tRNA(Thr) + L-threonine + ATP = L-threonyl-tRNA(Thr) + AMP + diphosphate + H(+)</text>
        <dbReference type="Rhea" id="RHEA:24624"/>
        <dbReference type="Rhea" id="RHEA-COMP:9670"/>
        <dbReference type="Rhea" id="RHEA-COMP:9704"/>
        <dbReference type="ChEBI" id="CHEBI:15378"/>
        <dbReference type="ChEBI" id="CHEBI:30616"/>
        <dbReference type="ChEBI" id="CHEBI:33019"/>
        <dbReference type="ChEBI" id="CHEBI:57926"/>
        <dbReference type="ChEBI" id="CHEBI:78442"/>
        <dbReference type="ChEBI" id="CHEBI:78534"/>
        <dbReference type="ChEBI" id="CHEBI:456215"/>
        <dbReference type="EC" id="6.1.1.3"/>
    </reaction>
</comment>
<comment type="cofactor">
    <cofactor evidence="1">
        <name>Zn(2+)</name>
        <dbReference type="ChEBI" id="CHEBI:29105"/>
    </cofactor>
    <text evidence="1">Binds 1 zinc ion per subunit.</text>
</comment>
<comment type="subunit">
    <text evidence="1">Homodimer.</text>
</comment>
<comment type="subcellular location">
    <subcellularLocation>
        <location evidence="1">Cytoplasm</location>
    </subcellularLocation>
</comment>
<comment type="similarity">
    <text evidence="1">Belongs to the class-II aminoacyl-tRNA synthetase family.</text>
</comment>
<organism>
    <name type="scientific">Xylella fastidiosa (strain 9a5c)</name>
    <dbReference type="NCBI Taxonomy" id="160492"/>
    <lineage>
        <taxon>Bacteria</taxon>
        <taxon>Pseudomonadati</taxon>
        <taxon>Pseudomonadota</taxon>
        <taxon>Gammaproteobacteria</taxon>
        <taxon>Lysobacterales</taxon>
        <taxon>Lysobacteraceae</taxon>
        <taxon>Xylella</taxon>
    </lineage>
</organism>
<accession>Q9PFE2</accession>
<name>SYT_XYLFA</name>